<accession>Q1JFG4</accession>
<sequence length="953" mass="105536">MSKKRLHEIAKEIGKSSKEVVEHAKYLGLDVKSHASSVEEADAKKIISSFSKASKPDVTASQTVKPKEVAQPSVTVVKETGSEHVEKTQVSKPKSRNFKAEREARAKEQAARKQANGSSHRSQERRGGYRQPNNHQTNEQGDKRITHRSQGDTNDKRIERKASNVSPRHDNHQLVGDRNRSFAKENHKNGRFTNQKKQGRQEPQSKSPKIDFKARAAALKAEQNAEYSRQSETRFRAQQEAKRLAELARQEAKEAALKAQAEEMSHREAALKSIEEAETKLKSSNISAKSTADNRRKKQARPEKNRELTHHSQEGQKKNKKSWNSQNQVRNQKNSNWNKNKKTKKGKNVKNTNTAPKPVTERKFHELPKEFEYTEGMTVAEIAKRIKREPAEIVKKLFMMGVMATQNQSLDGDTIELLMVDYGIEAKAKVEVDDADIERFFEDENYLNPENIVERAPVVTIMGHVDHGKTTLLDTLRNSRVATGEAGGITQHIGAYQIEEAGKKITFLDTPGHAAFTSMRARGASVTDITILIVAADDGVMPQTIEAINHSKAAGVPIIVAINKIDKPGANPERVIAELAEYGIISTAWGGECEFVEISAKFNKNIDELLETVLLVAEVEELKADPTVRAIGTVIEARLDKGKGAIATLLVQQGTLHVQDPIVVGNTFGRVRAMVNDLGRRVKSAEPSTPVSITGLNETPMAGDHFAVYADEKAARAAGEERSKRALLKQRQNTQRVSLDNLFDTLKAGEIKTVNVIIKADVQGSVEALAASLVKIEVEGVRVNVVHSAVGAINESDVTLAEASNAVIIGFNVRPTPQARQQADTDDVEIRLHSIIYKVIEEVEEAMKGKLDPVYQEKILGEAIIRETFKVSKVGTIGGFMVINGKVTRDSSVRVIRDSVVIFDGKLASLKHYKDDVKEVGNAQEGGLMIENFNDLKVDDTIEAYIMEEIVRK</sequence>
<name>IF2_STRPD</name>
<gene>
    <name evidence="2" type="primary">infB</name>
    <name type="ordered locus">MGAS10270_Spy1530</name>
</gene>
<keyword id="KW-0963">Cytoplasm</keyword>
<keyword id="KW-0342">GTP-binding</keyword>
<keyword id="KW-0396">Initiation factor</keyword>
<keyword id="KW-0547">Nucleotide-binding</keyword>
<keyword id="KW-0648">Protein biosynthesis</keyword>
<evidence type="ECO:0000250" key="1"/>
<evidence type="ECO:0000255" key="2">
    <source>
        <dbReference type="HAMAP-Rule" id="MF_00100"/>
    </source>
</evidence>
<evidence type="ECO:0000256" key="3">
    <source>
        <dbReference type="SAM" id="MobiDB-lite"/>
    </source>
</evidence>
<comment type="function">
    <text evidence="2">One of the essential components for the initiation of protein synthesis. Protects formylmethionyl-tRNA from spontaneous hydrolysis and promotes its binding to the 30S ribosomal subunits. Also involved in the hydrolysis of GTP during the formation of the 70S ribosomal complex.</text>
</comment>
<comment type="subcellular location">
    <subcellularLocation>
        <location evidence="2">Cytoplasm</location>
    </subcellularLocation>
</comment>
<comment type="similarity">
    <text evidence="2">Belongs to the TRAFAC class translation factor GTPase superfamily. Classic translation factor GTPase family. IF-2 subfamily.</text>
</comment>
<feature type="chain" id="PRO_1000008351" description="Translation initiation factor IF-2">
    <location>
        <begin position="1"/>
        <end position="953"/>
    </location>
</feature>
<feature type="domain" description="tr-type G">
    <location>
        <begin position="454"/>
        <end position="623"/>
    </location>
</feature>
<feature type="region of interest" description="Disordered" evidence="3">
    <location>
        <begin position="48"/>
        <end position="240"/>
    </location>
</feature>
<feature type="region of interest" description="Disordered" evidence="3">
    <location>
        <begin position="279"/>
        <end position="363"/>
    </location>
</feature>
<feature type="region of interest" description="G1" evidence="1">
    <location>
        <begin position="463"/>
        <end position="470"/>
    </location>
</feature>
<feature type="region of interest" description="G2" evidence="1">
    <location>
        <begin position="488"/>
        <end position="492"/>
    </location>
</feature>
<feature type="region of interest" description="G3" evidence="1">
    <location>
        <begin position="509"/>
        <end position="512"/>
    </location>
</feature>
<feature type="region of interest" description="G4" evidence="1">
    <location>
        <begin position="563"/>
        <end position="566"/>
    </location>
</feature>
<feature type="region of interest" description="G5" evidence="1">
    <location>
        <begin position="599"/>
        <end position="601"/>
    </location>
</feature>
<feature type="compositionally biased region" description="Basic and acidic residues" evidence="3">
    <location>
        <begin position="80"/>
        <end position="89"/>
    </location>
</feature>
<feature type="compositionally biased region" description="Basic and acidic residues" evidence="3">
    <location>
        <begin position="98"/>
        <end position="111"/>
    </location>
</feature>
<feature type="compositionally biased region" description="Basic and acidic residues" evidence="3">
    <location>
        <begin position="140"/>
        <end position="188"/>
    </location>
</feature>
<feature type="compositionally biased region" description="Polar residues" evidence="3">
    <location>
        <begin position="191"/>
        <end position="207"/>
    </location>
</feature>
<feature type="compositionally biased region" description="Basic and acidic residues" evidence="3">
    <location>
        <begin position="229"/>
        <end position="240"/>
    </location>
</feature>
<feature type="compositionally biased region" description="Polar residues" evidence="3">
    <location>
        <begin position="282"/>
        <end position="291"/>
    </location>
</feature>
<feature type="compositionally biased region" description="Basic and acidic residues" evidence="3">
    <location>
        <begin position="300"/>
        <end position="317"/>
    </location>
</feature>
<feature type="compositionally biased region" description="Low complexity" evidence="3">
    <location>
        <begin position="322"/>
        <end position="338"/>
    </location>
</feature>
<feature type="compositionally biased region" description="Basic residues" evidence="3">
    <location>
        <begin position="339"/>
        <end position="348"/>
    </location>
</feature>
<feature type="binding site" evidence="2">
    <location>
        <begin position="463"/>
        <end position="470"/>
    </location>
    <ligand>
        <name>GTP</name>
        <dbReference type="ChEBI" id="CHEBI:37565"/>
    </ligand>
</feature>
<feature type="binding site" evidence="2">
    <location>
        <begin position="509"/>
        <end position="513"/>
    </location>
    <ligand>
        <name>GTP</name>
        <dbReference type="ChEBI" id="CHEBI:37565"/>
    </ligand>
</feature>
<feature type="binding site" evidence="2">
    <location>
        <begin position="563"/>
        <end position="566"/>
    </location>
    <ligand>
        <name>GTP</name>
        <dbReference type="ChEBI" id="CHEBI:37565"/>
    </ligand>
</feature>
<reference key="1">
    <citation type="journal article" date="2006" name="Proc. Natl. Acad. Sci. U.S.A.">
        <title>Molecular genetic anatomy of inter- and intraserotype variation in the human bacterial pathogen group A Streptococcus.</title>
        <authorList>
            <person name="Beres S.B."/>
            <person name="Richter E.W."/>
            <person name="Nagiec M.J."/>
            <person name="Sumby P."/>
            <person name="Porcella S.F."/>
            <person name="DeLeo F.R."/>
            <person name="Musser J.M."/>
        </authorList>
    </citation>
    <scope>NUCLEOTIDE SEQUENCE [LARGE SCALE GENOMIC DNA]</scope>
    <source>
        <strain>MGAS10270</strain>
    </source>
</reference>
<dbReference type="EMBL" id="CP000260">
    <property type="protein sequence ID" value="ABF34595.1"/>
    <property type="molecule type" value="Genomic_DNA"/>
</dbReference>
<dbReference type="SMR" id="Q1JFG4"/>
<dbReference type="KEGG" id="sph:MGAS10270_Spy1530"/>
<dbReference type="HOGENOM" id="CLU_006301_5_0_9"/>
<dbReference type="Proteomes" id="UP000002436">
    <property type="component" value="Chromosome"/>
</dbReference>
<dbReference type="GO" id="GO:0005829">
    <property type="term" value="C:cytosol"/>
    <property type="evidence" value="ECO:0007669"/>
    <property type="project" value="TreeGrafter"/>
</dbReference>
<dbReference type="GO" id="GO:0005525">
    <property type="term" value="F:GTP binding"/>
    <property type="evidence" value="ECO:0007669"/>
    <property type="project" value="UniProtKB-KW"/>
</dbReference>
<dbReference type="GO" id="GO:0003924">
    <property type="term" value="F:GTPase activity"/>
    <property type="evidence" value="ECO:0007669"/>
    <property type="project" value="UniProtKB-UniRule"/>
</dbReference>
<dbReference type="GO" id="GO:0003743">
    <property type="term" value="F:translation initiation factor activity"/>
    <property type="evidence" value="ECO:0007669"/>
    <property type="project" value="UniProtKB-UniRule"/>
</dbReference>
<dbReference type="CDD" id="cd01887">
    <property type="entry name" value="IF2_eIF5B"/>
    <property type="match status" value="1"/>
</dbReference>
<dbReference type="CDD" id="cd03702">
    <property type="entry name" value="IF2_mtIF2_II"/>
    <property type="match status" value="1"/>
</dbReference>
<dbReference type="CDD" id="cd03692">
    <property type="entry name" value="mtIF2_IVc"/>
    <property type="match status" value="1"/>
</dbReference>
<dbReference type="FunFam" id="2.40.30.10:FF:000007">
    <property type="entry name" value="Translation initiation factor IF-2"/>
    <property type="match status" value="1"/>
</dbReference>
<dbReference type="FunFam" id="2.40.30.10:FF:000008">
    <property type="entry name" value="Translation initiation factor IF-2"/>
    <property type="match status" value="1"/>
</dbReference>
<dbReference type="FunFam" id="3.40.50.10050:FF:000001">
    <property type="entry name" value="Translation initiation factor IF-2"/>
    <property type="match status" value="1"/>
</dbReference>
<dbReference type="FunFam" id="3.40.50.300:FF:000019">
    <property type="entry name" value="Translation initiation factor IF-2"/>
    <property type="match status" value="1"/>
</dbReference>
<dbReference type="Gene3D" id="1.10.10.2480">
    <property type="match status" value="1"/>
</dbReference>
<dbReference type="Gene3D" id="3.40.50.300">
    <property type="entry name" value="P-loop containing nucleotide triphosphate hydrolases"/>
    <property type="match status" value="1"/>
</dbReference>
<dbReference type="Gene3D" id="2.40.30.10">
    <property type="entry name" value="Translation factors"/>
    <property type="match status" value="2"/>
</dbReference>
<dbReference type="Gene3D" id="3.40.50.10050">
    <property type="entry name" value="Translation initiation factor IF- 2, domain 3"/>
    <property type="match status" value="1"/>
</dbReference>
<dbReference type="HAMAP" id="MF_00100_B">
    <property type="entry name" value="IF_2_B"/>
    <property type="match status" value="1"/>
</dbReference>
<dbReference type="InterPro" id="IPR053905">
    <property type="entry name" value="EF-G-like_DII"/>
</dbReference>
<dbReference type="InterPro" id="IPR044145">
    <property type="entry name" value="IF2_II"/>
</dbReference>
<dbReference type="InterPro" id="IPR006847">
    <property type="entry name" value="IF2_N"/>
</dbReference>
<dbReference type="InterPro" id="IPR027417">
    <property type="entry name" value="P-loop_NTPase"/>
</dbReference>
<dbReference type="InterPro" id="IPR005225">
    <property type="entry name" value="Small_GTP-bd"/>
</dbReference>
<dbReference type="InterPro" id="IPR000795">
    <property type="entry name" value="T_Tr_GTP-bd_dom"/>
</dbReference>
<dbReference type="InterPro" id="IPR000178">
    <property type="entry name" value="TF_IF2_bacterial-like"/>
</dbReference>
<dbReference type="InterPro" id="IPR015760">
    <property type="entry name" value="TIF_IF2"/>
</dbReference>
<dbReference type="InterPro" id="IPR023115">
    <property type="entry name" value="TIF_IF2_dom3"/>
</dbReference>
<dbReference type="InterPro" id="IPR036925">
    <property type="entry name" value="TIF_IF2_dom3_sf"/>
</dbReference>
<dbReference type="InterPro" id="IPR009000">
    <property type="entry name" value="Transl_B-barrel_sf"/>
</dbReference>
<dbReference type="NCBIfam" id="TIGR00487">
    <property type="entry name" value="IF-2"/>
    <property type="match status" value="1"/>
</dbReference>
<dbReference type="NCBIfam" id="TIGR00231">
    <property type="entry name" value="small_GTP"/>
    <property type="match status" value="1"/>
</dbReference>
<dbReference type="PANTHER" id="PTHR43381:SF5">
    <property type="entry name" value="TR-TYPE G DOMAIN-CONTAINING PROTEIN"/>
    <property type="match status" value="1"/>
</dbReference>
<dbReference type="PANTHER" id="PTHR43381">
    <property type="entry name" value="TRANSLATION INITIATION FACTOR IF-2-RELATED"/>
    <property type="match status" value="1"/>
</dbReference>
<dbReference type="Pfam" id="PF22042">
    <property type="entry name" value="EF-G_D2"/>
    <property type="match status" value="1"/>
</dbReference>
<dbReference type="Pfam" id="PF00009">
    <property type="entry name" value="GTP_EFTU"/>
    <property type="match status" value="1"/>
</dbReference>
<dbReference type="Pfam" id="PF11987">
    <property type="entry name" value="IF-2"/>
    <property type="match status" value="1"/>
</dbReference>
<dbReference type="Pfam" id="PF04760">
    <property type="entry name" value="IF2_N"/>
    <property type="match status" value="2"/>
</dbReference>
<dbReference type="PRINTS" id="PR00449">
    <property type="entry name" value="RASTRNSFRMNG"/>
</dbReference>
<dbReference type="SUPFAM" id="SSF52156">
    <property type="entry name" value="Initiation factor IF2/eIF5b, domain 3"/>
    <property type="match status" value="1"/>
</dbReference>
<dbReference type="SUPFAM" id="SSF52540">
    <property type="entry name" value="P-loop containing nucleoside triphosphate hydrolases"/>
    <property type="match status" value="1"/>
</dbReference>
<dbReference type="SUPFAM" id="SSF50447">
    <property type="entry name" value="Translation proteins"/>
    <property type="match status" value="2"/>
</dbReference>
<dbReference type="PROSITE" id="PS51722">
    <property type="entry name" value="G_TR_2"/>
    <property type="match status" value="1"/>
</dbReference>
<dbReference type="PROSITE" id="PS01176">
    <property type="entry name" value="IF2"/>
    <property type="match status" value="1"/>
</dbReference>
<proteinExistence type="inferred from homology"/>
<protein>
    <recommendedName>
        <fullName evidence="2">Translation initiation factor IF-2</fullName>
    </recommendedName>
</protein>
<organism>
    <name type="scientific">Streptococcus pyogenes serotype M2 (strain MGAS10270)</name>
    <dbReference type="NCBI Taxonomy" id="370552"/>
    <lineage>
        <taxon>Bacteria</taxon>
        <taxon>Bacillati</taxon>
        <taxon>Bacillota</taxon>
        <taxon>Bacilli</taxon>
        <taxon>Lactobacillales</taxon>
        <taxon>Streptococcaceae</taxon>
        <taxon>Streptococcus</taxon>
    </lineage>
</organism>